<comment type="function">
    <text evidence="1">Binds to DNA and alters its conformation. May be involved in regulation of gene expression, nucleoid organization and DNA protection.</text>
</comment>
<comment type="subunit">
    <text evidence="1">Homodimer.</text>
</comment>
<comment type="subcellular location">
    <subcellularLocation>
        <location evidence="1">Cytoplasm</location>
        <location evidence="1">Nucleoid</location>
    </subcellularLocation>
</comment>
<comment type="similarity">
    <text evidence="1">Belongs to the YbaB/EbfC family.</text>
</comment>
<protein>
    <recommendedName>
        <fullName evidence="1">Nucleoid-associated protein YbaB</fullName>
    </recommendedName>
</protein>
<name>YBAB_ECO5E</name>
<evidence type="ECO:0000255" key="1">
    <source>
        <dbReference type="HAMAP-Rule" id="MF_00274"/>
    </source>
</evidence>
<dbReference type="EMBL" id="CP001164">
    <property type="protein sequence ID" value="ACI36926.1"/>
    <property type="molecule type" value="Genomic_DNA"/>
</dbReference>
<dbReference type="RefSeq" id="WP_000467098.1">
    <property type="nucleotide sequence ID" value="NC_011353.1"/>
</dbReference>
<dbReference type="SMR" id="B5Z3Y1"/>
<dbReference type="KEGG" id="ecf:ECH74115_0562"/>
<dbReference type="HOGENOM" id="CLU_140930_0_0_6"/>
<dbReference type="GO" id="GO:0043590">
    <property type="term" value="C:bacterial nucleoid"/>
    <property type="evidence" value="ECO:0007669"/>
    <property type="project" value="UniProtKB-UniRule"/>
</dbReference>
<dbReference type="GO" id="GO:0005829">
    <property type="term" value="C:cytosol"/>
    <property type="evidence" value="ECO:0007669"/>
    <property type="project" value="TreeGrafter"/>
</dbReference>
<dbReference type="GO" id="GO:0003677">
    <property type="term" value="F:DNA binding"/>
    <property type="evidence" value="ECO:0007669"/>
    <property type="project" value="UniProtKB-UniRule"/>
</dbReference>
<dbReference type="FunFam" id="3.30.1310.10:FF:000001">
    <property type="entry name" value="Nucleoid-associated protein YbaB"/>
    <property type="match status" value="1"/>
</dbReference>
<dbReference type="Gene3D" id="3.30.1310.10">
    <property type="entry name" value="Nucleoid-associated protein YbaB-like domain"/>
    <property type="match status" value="1"/>
</dbReference>
<dbReference type="HAMAP" id="MF_00274">
    <property type="entry name" value="DNA_YbaB_EbfC"/>
    <property type="match status" value="1"/>
</dbReference>
<dbReference type="InterPro" id="IPR036894">
    <property type="entry name" value="YbaB-like_sf"/>
</dbReference>
<dbReference type="InterPro" id="IPR004401">
    <property type="entry name" value="YbaB/EbfC"/>
</dbReference>
<dbReference type="NCBIfam" id="TIGR00103">
    <property type="entry name" value="DNA_YbaB_EbfC"/>
    <property type="match status" value="1"/>
</dbReference>
<dbReference type="PANTHER" id="PTHR33449">
    <property type="entry name" value="NUCLEOID-ASSOCIATED PROTEIN YBAB"/>
    <property type="match status" value="1"/>
</dbReference>
<dbReference type="PANTHER" id="PTHR33449:SF1">
    <property type="entry name" value="NUCLEOID-ASSOCIATED PROTEIN YBAB"/>
    <property type="match status" value="1"/>
</dbReference>
<dbReference type="Pfam" id="PF02575">
    <property type="entry name" value="YbaB_DNA_bd"/>
    <property type="match status" value="1"/>
</dbReference>
<dbReference type="PIRSF" id="PIRSF004555">
    <property type="entry name" value="UCP004555"/>
    <property type="match status" value="1"/>
</dbReference>
<dbReference type="SUPFAM" id="SSF82607">
    <property type="entry name" value="YbaB-like"/>
    <property type="match status" value="1"/>
</dbReference>
<feature type="chain" id="PRO_1000114610" description="Nucleoid-associated protein YbaB">
    <location>
        <begin position="1"/>
        <end position="109"/>
    </location>
</feature>
<accession>B5Z3Y1</accession>
<proteinExistence type="inferred from homology"/>
<reference key="1">
    <citation type="journal article" date="2011" name="Proc. Natl. Acad. Sci. U.S.A.">
        <title>Genomic anatomy of Escherichia coli O157:H7 outbreaks.</title>
        <authorList>
            <person name="Eppinger M."/>
            <person name="Mammel M.K."/>
            <person name="Leclerc J.E."/>
            <person name="Ravel J."/>
            <person name="Cebula T.A."/>
        </authorList>
    </citation>
    <scope>NUCLEOTIDE SEQUENCE [LARGE SCALE GENOMIC DNA]</scope>
    <source>
        <strain>EC4115 / EHEC</strain>
    </source>
</reference>
<sequence>MFGKGGLGNLMKQAQQMQEKMQKMQEEIAQLEVTGESGAGLVKVTINGAHNCRRVEIDPSLLEDDKEMLEDLVAAAFNDAARRIEETQKEKMASVSSGMQLPPGFKMPF</sequence>
<organism>
    <name type="scientific">Escherichia coli O157:H7 (strain EC4115 / EHEC)</name>
    <dbReference type="NCBI Taxonomy" id="444450"/>
    <lineage>
        <taxon>Bacteria</taxon>
        <taxon>Pseudomonadati</taxon>
        <taxon>Pseudomonadota</taxon>
        <taxon>Gammaproteobacteria</taxon>
        <taxon>Enterobacterales</taxon>
        <taxon>Enterobacteriaceae</taxon>
        <taxon>Escherichia</taxon>
    </lineage>
</organism>
<keyword id="KW-0963">Cytoplasm</keyword>
<keyword id="KW-0238">DNA-binding</keyword>
<gene>
    <name evidence="1" type="primary">ybaB</name>
    <name type="ordered locus">ECH74115_0562</name>
</gene>